<reference key="1">
    <citation type="journal article" date="2004" name="Proc. Natl. Acad. Sci. U.S.A.">
        <title>Genomic plasticity of the causative agent of melioidosis, Burkholderia pseudomallei.</title>
        <authorList>
            <person name="Holden M.T.G."/>
            <person name="Titball R.W."/>
            <person name="Peacock S.J."/>
            <person name="Cerdeno-Tarraga A.-M."/>
            <person name="Atkins T."/>
            <person name="Crossman L.C."/>
            <person name="Pitt T."/>
            <person name="Churcher C."/>
            <person name="Mungall K.L."/>
            <person name="Bentley S.D."/>
            <person name="Sebaihia M."/>
            <person name="Thomson N.R."/>
            <person name="Bason N."/>
            <person name="Beacham I.R."/>
            <person name="Brooks K."/>
            <person name="Brown K.A."/>
            <person name="Brown N.F."/>
            <person name="Challis G.L."/>
            <person name="Cherevach I."/>
            <person name="Chillingworth T."/>
            <person name="Cronin A."/>
            <person name="Crossett B."/>
            <person name="Davis P."/>
            <person name="DeShazer D."/>
            <person name="Feltwell T."/>
            <person name="Fraser A."/>
            <person name="Hance Z."/>
            <person name="Hauser H."/>
            <person name="Holroyd S."/>
            <person name="Jagels K."/>
            <person name="Keith K.E."/>
            <person name="Maddison M."/>
            <person name="Moule S."/>
            <person name="Price C."/>
            <person name="Quail M.A."/>
            <person name="Rabbinowitsch E."/>
            <person name="Rutherford K."/>
            <person name="Sanders M."/>
            <person name="Simmonds M."/>
            <person name="Songsivilai S."/>
            <person name="Stevens K."/>
            <person name="Tumapa S."/>
            <person name="Vesaratchavest M."/>
            <person name="Whitehead S."/>
            <person name="Yeats C."/>
            <person name="Barrell B.G."/>
            <person name="Oyston P.C.F."/>
            <person name="Parkhill J."/>
        </authorList>
    </citation>
    <scope>NUCLEOTIDE SEQUENCE [LARGE SCALE GENOMIC DNA]</scope>
    <source>
        <strain>K96243</strain>
    </source>
</reference>
<feature type="chain" id="PRO_0000103593" description="Phosphoenolpyruvate carboxykinase [GTP]">
    <location>
        <begin position="1"/>
        <end position="621"/>
    </location>
</feature>
<feature type="region of interest" description="Disordered" evidence="2">
    <location>
        <begin position="391"/>
        <end position="414"/>
    </location>
</feature>
<feature type="compositionally biased region" description="Polar residues" evidence="2">
    <location>
        <begin position="400"/>
        <end position="410"/>
    </location>
</feature>
<feature type="active site" evidence="1">
    <location>
        <position position="280"/>
    </location>
</feature>
<feature type="binding site" evidence="1">
    <location>
        <position position="88"/>
    </location>
    <ligand>
        <name>substrate</name>
    </ligand>
</feature>
<feature type="binding site" evidence="1">
    <location>
        <begin position="227"/>
        <end position="229"/>
    </location>
    <ligand>
        <name>substrate</name>
    </ligand>
</feature>
<feature type="binding site" evidence="1">
    <location>
        <position position="236"/>
    </location>
    <ligand>
        <name>Mn(2+)</name>
        <dbReference type="ChEBI" id="CHEBI:29035"/>
    </ligand>
</feature>
<feature type="binding site" evidence="1">
    <location>
        <position position="256"/>
    </location>
    <ligand>
        <name>Mn(2+)</name>
        <dbReference type="ChEBI" id="CHEBI:29035"/>
    </ligand>
</feature>
<feature type="binding site" evidence="1">
    <location>
        <position position="278"/>
    </location>
    <ligand>
        <name>substrate</name>
    </ligand>
</feature>
<feature type="binding site" evidence="1">
    <location>
        <begin position="279"/>
        <end position="284"/>
    </location>
    <ligand>
        <name>GTP</name>
        <dbReference type="ChEBI" id="CHEBI:37565"/>
    </ligand>
</feature>
<feature type="binding site" evidence="1">
    <location>
        <position position="305"/>
    </location>
    <ligand>
        <name>Mn(2+)</name>
        <dbReference type="ChEBI" id="CHEBI:29035"/>
    </ligand>
</feature>
<feature type="binding site" evidence="1">
    <location>
        <begin position="399"/>
        <end position="401"/>
    </location>
    <ligand>
        <name>substrate</name>
    </ligand>
</feature>
<feature type="binding site" evidence="1">
    <location>
        <position position="401"/>
    </location>
    <ligand>
        <name>GTP</name>
        <dbReference type="ChEBI" id="CHEBI:37565"/>
    </ligand>
</feature>
<feature type="binding site" evidence="1">
    <location>
        <position position="432"/>
    </location>
    <ligand>
        <name>GTP</name>
        <dbReference type="ChEBI" id="CHEBI:37565"/>
    </ligand>
</feature>
<feature type="binding site" evidence="1">
    <location>
        <begin position="529"/>
        <end position="532"/>
    </location>
    <ligand>
        <name>GTP</name>
        <dbReference type="ChEBI" id="CHEBI:37565"/>
    </ligand>
</feature>
<sequence length="621" mass="68534">MTRSNVVAATRTVPIDVPEYVKHRGLIDWVARIAELTEPDRVVWCDGSQQEYDRLCDAMVEQRTMVRLNPAKRPNSFLALSDPSDVARVEDRTFICSEHRDDAGPTNHWVAPAEMRATLNGLFRGAMRGRTLYVVPFSMGPLGSPIAHIGVELSDSPYVVVNMRIMTRMGRAVLDALGERGEYVPCVHSVGRPLAAGEQDVPWPCNPTKYIVHFPESREIWSFGSGYGGNALLGKKCFALRIASTMGRDEGWLAEHMLILGVTSPEGRKYHIAAAFPSACGKTNFAMLIPPKGFEGWRVTTIGDDIAWLKPGRDGRLYAINPEAGYFGVAPGTGEKTNPNALATLRENVIFTNVALTEDGDVWWEGLTDTPPARLTDWQGNAWTPEIGRETGRKAAHPNSRFTAPASQCPSIDDDWENPGGVPIDAFIFGGRRSTTVPLVTEARDWIEGVYMAATMGSETTAAAAGQQGIVRRDPFAMLPFCGYNMSDYFSHWLALGEKLAAAGATLPKIYCVNWFRKDADGRFAWPGFGENMRVLKWMLDRIDGRGEGVEHAFGVTPRYEDLHWAGLAFSPAQYAQVTSMNPDEWRAELALHAELFDKLSARLPDALAETKARIEKRLGG</sequence>
<name>PCKG_BURPS</name>
<organism>
    <name type="scientific">Burkholderia pseudomallei (strain K96243)</name>
    <dbReference type="NCBI Taxonomy" id="272560"/>
    <lineage>
        <taxon>Bacteria</taxon>
        <taxon>Pseudomonadati</taxon>
        <taxon>Pseudomonadota</taxon>
        <taxon>Betaproteobacteria</taxon>
        <taxon>Burkholderiales</taxon>
        <taxon>Burkholderiaceae</taxon>
        <taxon>Burkholderia</taxon>
        <taxon>pseudomallei group</taxon>
    </lineage>
</organism>
<proteinExistence type="inferred from homology"/>
<comment type="function">
    <text evidence="1">Catalyzes the conversion of oxaloacetate (OAA) to phosphoenolpyruvate (PEP), the rate-limiting step in the metabolic pathway that produces glucose from lactate and other precursors derived from the citric acid cycle.</text>
</comment>
<comment type="catalytic activity">
    <reaction evidence="1">
        <text>oxaloacetate + GTP = phosphoenolpyruvate + GDP + CO2</text>
        <dbReference type="Rhea" id="RHEA:10388"/>
        <dbReference type="ChEBI" id="CHEBI:16452"/>
        <dbReference type="ChEBI" id="CHEBI:16526"/>
        <dbReference type="ChEBI" id="CHEBI:37565"/>
        <dbReference type="ChEBI" id="CHEBI:58189"/>
        <dbReference type="ChEBI" id="CHEBI:58702"/>
        <dbReference type="EC" id="4.1.1.32"/>
    </reaction>
</comment>
<comment type="cofactor">
    <cofactor evidence="1">
        <name>Mn(2+)</name>
        <dbReference type="ChEBI" id="CHEBI:29035"/>
    </cofactor>
    <text evidence="1">Binds 1 Mn(2+) ion per subunit.</text>
</comment>
<comment type="pathway">
    <text evidence="1">Carbohydrate biosynthesis; gluconeogenesis.</text>
</comment>
<comment type="subunit">
    <text evidence="1">Monomer.</text>
</comment>
<comment type="subcellular location">
    <subcellularLocation>
        <location evidence="1">Cytoplasm</location>
    </subcellularLocation>
</comment>
<comment type="similarity">
    <text evidence="1">Belongs to the phosphoenolpyruvate carboxykinase [GTP] family.</text>
</comment>
<evidence type="ECO:0000255" key="1">
    <source>
        <dbReference type="HAMAP-Rule" id="MF_00452"/>
    </source>
</evidence>
<evidence type="ECO:0000256" key="2">
    <source>
        <dbReference type="SAM" id="MobiDB-lite"/>
    </source>
</evidence>
<keyword id="KW-0963">Cytoplasm</keyword>
<keyword id="KW-0210">Decarboxylase</keyword>
<keyword id="KW-0312">Gluconeogenesis</keyword>
<keyword id="KW-0342">GTP-binding</keyword>
<keyword id="KW-0456">Lyase</keyword>
<keyword id="KW-0464">Manganese</keyword>
<keyword id="KW-0479">Metal-binding</keyword>
<keyword id="KW-0547">Nucleotide-binding</keyword>
<keyword id="KW-1185">Reference proteome</keyword>
<gene>
    <name evidence="1" type="primary">pckG</name>
    <name type="ordered locus">BPSL1324</name>
</gene>
<protein>
    <recommendedName>
        <fullName evidence="1">Phosphoenolpyruvate carboxykinase [GTP]</fullName>
        <shortName evidence="1">PEP carboxykinase</shortName>
        <shortName evidence="1">PEPCK</shortName>
        <ecNumber evidence="1">4.1.1.32</ecNumber>
    </recommendedName>
</protein>
<dbReference type="EC" id="4.1.1.32" evidence="1"/>
<dbReference type="EMBL" id="BX571965">
    <property type="protein sequence ID" value="CAH35322.1"/>
    <property type="molecule type" value="Genomic_DNA"/>
</dbReference>
<dbReference type="RefSeq" id="WP_004193209.1">
    <property type="nucleotide sequence ID" value="NZ_CP009538.1"/>
</dbReference>
<dbReference type="RefSeq" id="YP_107949.1">
    <property type="nucleotide sequence ID" value="NC_006350.1"/>
</dbReference>
<dbReference type="SMR" id="Q63VB7"/>
<dbReference type="STRING" id="272560.BPSL1324"/>
<dbReference type="KEGG" id="bps:BPSL1324"/>
<dbReference type="PATRIC" id="fig|272560.51.peg.162"/>
<dbReference type="eggNOG" id="COG1274">
    <property type="taxonomic scope" value="Bacteria"/>
</dbReference>
<dbReference type="UniPathway" id="UPA00138"/>
<dbReference type="Proteomes" id="UP000000605">
    <property type="component" value="Chromosome 1"/>
</dbReference>
<dbReference type="GO" id="GO:0005829">
    <property type="term" value="C:cytosol"/>
    <property type="evidence" value="ECO:0007669"/>
    <property type="project" value="TreeGrafter"/>
</dbReference>
<dbReference type="GO" id="GO:0005525">
    <property type="term" value="F:GTP binding"/>
    <property type="evidence" value="ECO:0007669"/>
    <property type="project" value="UniProtKB-UniRule"/>
</dbReference>
<dbReference type="GO" id="GO:0030145">
    <property type="term" value="F:manganese ion binding"/>
    <property type="evidence" value="ECO:0007669"/>
    <property type="project" value="UniProtKB-UniRule"/>
</dbReference>
<dbReference type="GO" id="GO:0004613">
    <property type="term" value="F:phosphoenolpyruvate carboxykinase (GTP) activity"/>
    <property type="evidence" value="ECO:0007669"/>
    <property type="project" value="UniProtKB-UniRule"/>
</dbReference>
<dbReference type="GO" id="GO:0071333">
    <property type="term" value="P:cellular response to glucose stimulus"/>
    <property type="evidence" value="ECO:0007669"/>
    <property type="project" value="TreeGrafter"/>
</dbReference>
<dbReference type="GO" id="GO:0006094">
    <property type="term" value="P:gluconeogenesis"/>
    <property type="evidence" value="ECO:0007669"/>
    <property type="project" value="UniProtKB-UniRule"/>
</dbReference>
<dbReference type="GO" id="GO:0046327">
    <property type="term" value="P:glycerol biosynthetic process from pyruvate"/>
    <property type="evidence" value="ECO:0007669"/>
    <property type="project" value="TreeGrafter"/>
</dbReference>
<dbReference type="GO" id="GO:0006107">
    <property type="term" value="P:oxaloacetate metabolic process"/>
    <property type="evidence" value="ECO:0007669"/>
    <property type="project" value="TreeGrafter"/>
</dbReference>
<dbReference type="GO" id="GO:0019543">
    <property type="term" value="P:propionate catabolic process"/>
    <property type="evidence" value="ECO:0007669"/>
    <property type="project" value="TreeGrafter"/>
</dbReference>
<dbReference type="GO" id="GO:0033993">
    <property type="term" value="P:response to lipid"/>
    <property type="evidence" value="ECO:0007669"/>
    <property type="project" value="TreeGrafter"/>
</dbReference>
<dbReference type="GO" id="GO:0042594">
    <property type="term" value="P:response to starvation"/>
    <property type="evidence" value="ECO:0007669"/>
    <property type="project" value="TreeGrafter"/>
</dbReference>
<dbReference type="CDD" id="cd00819">
    <property type="entry name" value="PEPCK_GTP"/>
    <property type="match status" value="1"/>
</dbReference>
<dbReference type="FunFam" id="3.40.449.10:FF:000005">
    <property type="entry name" value="Phosphoenolpyruvate carboxykinase [GTP]"/>
    <property type="match status" value="1"/>
</dbReference>
<dbReference type="Gene3D" id="3.90.228.20">
    <property type="match status" value="1"/>
</dbReference>
<dbReference type="Gene3D" id="3.40.449.10">
    <property type="entry name" value="Phosphoenolpyruvate Carboxykinase, domain 1"/>
    <property type="match status" value="1"/>
</dbReference>
<dbReference type="Gene3D" id="2.170.8.10">
    <property type="entry name" value="Phosphoenolpyruvate Carboxykinase, domain 2"/>
    <property type="match status" value="1"/>
</dbReference>
<dbReference type="HAMAP" id="MF_00452">
    <property type="entry name" value="PEPCK_GTP"/>
    <property type="match status" value="1"/>
</dbReference>
<dbReference type="InterPro" id="IPR018091">
    <property type="entry name" value="PEP_carboxykin_GTP_CS"/>
</dbReference>
<dbReference type="InterPro" id="IPR013035">
    <property type="entry name" value="PEP_carboxykinase_C"/>
</dbReference>
<dbReference type="InterPro" id="IPR008209">
    <property type="entry name" value="PEP_carboxykinase_GTP"/>
</dbReference>
<dbReference type="InterPro" id="IPR035077">
    <property type="entry name" value="PEP_carboxykinase_GTP_C"/>
</dbReference>
<dbReference type="InterPro" id="IPR035078">
    <property type="entry name" value="PEP_carboxykinase_GTP_N"/>
</dbReference>
<dbReference type="InterPro" id="IPR008210">
    <property type="entry name" value="PEP_carboxykinase_N"/>
</dbReference>
<dbReference type="NCBIfam" id="NF003253">
    <property type="entry name" value="PRK04210.1"/>
    <property type="match status" value="1"/>
</dbReference>
<dbReference type="PANTHER" id="PTHR11561">
    <property type="entry name" value="PHOSPHOENOLPYRUVATE CARBOXYKINASE"/>
    <property type="match status" value="1"/>
</dbReference>
<dbReference type="PANTHER" id="PTHR11561:SF0">
    <property type="entry name" value="PHOSPHOENOLPYRUVATE CARBOXYKINASE [GTP]-RELATED"/>
    <property type="match status" value="1"/>
</dbReference>
<dbReference type="Pfam" id="PF00821">
    <property type="entry name" value="PEPCK_GTP"/>
    <property type="match status" value="1"/>
</dbReference>
<dbReference type="Pfam" id="PF17297">
    <property type="entry name" value="PEPCK_N"/>
    <property type="match status" value="1"/>
</dbReference>
<dbReference type="PIRSF" id="PIRSF001348">
    <property type="entry name" value="PEP_carboxykinase_GTP"/>
    <property type="match status" value="1"/>
</dbReference>
<dbReference type="SUPFAM" id="SSF68923">
    <property type="entry name" value="PEP carboxykinase N-terminal domain"/>
    <property type="match status" value="1"/>
</dbReference>
<dbReference type="SUPFAM" id="SSF53795">
    <property type="entry name" value="PEP carboxykinase-like"/>
    <property type="match status" value="1"/>
</dbReference>
<dbReference type="PROSITE" id="PS00505">
    <property type="entry name" value="PEPCK_GTP"/>
    <property type="match status" value="1"/>
</dbReference>
<accession>Q63VB7</accession>